<protein>
    <recommendedName>
        <fullName evidence="1">L-arabinose isomerase</fullName>
        <ecNumber evidence="1">5.3.1.4</ecNumber>
    </recommendedName>
</protein>
<organism>
    <name type="scientific">Thermotoga sp. (strain RQ2)</name>
    <dbReference type="NCBI Taxonomy" id="126740"/>
    <lineage>
        <taxon>Bacteria</taxon>
        <taxon>Thermotogati</taxon>
        <taxon>Thermotogota</taxon>
        <taxon>Thermotogae</taxon>
        <taxon>Thermotogales</taxon>
        <taxon>Thermotogaceae</taxon>
        <taxon>Thermotoga</taxon>
    </lineage>
</organism>
<dbReference type="EC" id="5.3.1.4" evidence="1"/>
<dbReference type="EMBL" id="CP000969">
    <property type="protein sequence ID" value="ACB09025.1"/>
    <property type="molecule type" value="Genomic_DNA"/>
</dbReference>
<dbReference type="RefSeq" id="WP_012310673.1">
    <property type="nucleotide sequence ID" value="NC_010483.1"/>
</dbReference>
<dbReference type="SMR" id="B1L9M7"/>
<dbReference type="KEGG" id="trq:TRQ2_0672"/>
<dbReference type="HOGENOM" id="CLU_045663_0_0_0"/>
<dbReference type="UniPathway" id="UPA00145">
    <property type="reaction ID" value="UER00565"/>
</dbReference>
<dbReference type="Proteomes" id="UP000001687">
    <property type="component" value="Chromosome"/>
</dbReference>
<dbReference type="GO" id="GO:0005829">
    <property type="term" value="C:cytosol"/>
    <property type="evidence" value="ECO:0007669"/>
    <property type="project" value="TreeGrafter"/>
</dbReference>
<dbReference type="GO" id="GO:0008733">
    <property type="term" value="F:L-arabinose isomerase activity"/>
    <property type="evidence" value="ECO:0007669"/>
    <property type="project" value="UniProtKB-UniRule"/>
</dbReference>
<dbReference type="GO" id="GO:0030145">
    <property type="term" value="F:manganese ion binding"/>
    <property type="evidence" value="ECO:0007669"/>
    <property type="project" value="UniProtKB-UniRule"/>
</dbReference>
<dbReference type="GO" id="GO:0019569">
    <property type="term" value="P:L-arabinose catabolic process to xylulose 5-phosphate"/>
    <property type="evidence" value="ECO:0007669"/>
    <property type="project" value="UniProtKB-UniRule"/>
</dbReference>
<dbReference type="CDD" id="cd03557">
    <property type="entry name" value="L-arabinose_isomerase"/>
    <property type="match status" value="1"/>
</dbReference>
<dbReference type="Gene3D" id="3.40.50.10940">
    <property type="match status" value="1"/>
</dbReference>
<dbReference type="HAMAP" id="MF_00519">
    <property type="entry name" value="Arabinose_Isome"/>
    <property type="match status" value="1"/>
</dbReference>
<dbReference type="InterPro" id="IPR024664">
    <property type="entry name" value="Ara_Isoase_C"/>
</dbReference>
<dbReference type="InterPro" id="IPR055390">
    <property type="entry name" value="AraA_central"/>
</dbReference>
<dbReference type="InterPro" id="IPR055389">
    <property type="entry name" value="AraA_N"/>
</dbReference>
<dbReference type="InterPro" id="IPR038583">
    <property type="entry name" value="AraA_N_sf"/>
</dbReference>
<dbReference type="InterPro" id="IPR004216">
    <property type="entry name" value="Fuc/Ara_isomerase_C"/>
</dbReference>
<dbReference type="InterPro" id="IPR009015">
    <property type="entry name" value="Fucose_isomerase_N/cen_sf"/>
</dbReference>
<dbReference type="InterPro" id="IPR003762">
    <property type="entry name" value="Lara_isomerase"/>
</dbReference>
<dbReference type="NCBIfam" id="NF002795">
    <property type="entry name" value="PRK02929.1"/>
    <property type="match status" value="1"/>
</dbReference>
<dbReference type="PANTHER" id="PTHR38464">
    <property type="entry name" value="L-ARABINOSE ISOMERASE"/>
    <property type="match status" value="1"/>
</dbReference>
<dbReference type="PANTHER" id="PTHR38464:SF1">
    <property type="entry name" value="L-ARABINOSE ISOMERASE"/>
    <property type="match status" value="1"/>
</dbReference>
<dbReference type="Pfam" id="PF24856">
    <property type="entry name" value="AraA_central"/>
    <property type="match status" value="1"/>
</dbReference>
<dbReference type="Pfam" id="PF02610">
    <property type="entry name" value="AraA_N"/>
    <property type="match status" value="1"/>
</dbReference>
<dbReference type="Pfam" id="PF11762">
    <property type="entry name" value="Arabinose_Iso_C"/>
    <property type="match status" value="1"/>
</dbReference>
<dbReference type="PIRSF" id="PIRSF001478">
    <property type="entry name" value="L-ara_isomerase"/>
    <property type="match status" value="1"/>
</dbReference>
<dbReference type="SUPFAM" id="SSF50443">
    <property type="entry name" value="FucI/AraA C-terminal domain-like"/>
    <property type="match status" value="1"/>
</dbReference>
<dbReference type="SUPFAM" id="SSF53743">
    <property type="entry name" value="FucI/AraA N-terminal and middle domains"/>
    <property type="match status" value="1"/>
</dbReference>
<reference key="1">
    <citation type="journal article" date="2011" name="J. Bacteriol.">
        <title>Genome sequence of Thermotoga sp. strain RQ2, a hyperthermophilic bacterium isolated from a geothermally heated region of the seafloor near Ribeira Quente, the Azores.</title>
        <authorList>
            <person name="Swithers K.S."/>
            <person name="DiPippo J.L."/>
            <person name="Bruce D.C."/>
            <person name="Detter C."/>
            <person name="Tapia R."/>
            <person name="Han S."/>
            <person name="Saunders E."/>
            <person name="Goodwin L.A."/>
            <person name="Han J."/>
            <person name="Woyke T."/>
            <person name="Pitluck S."/>
            <person name="Pennacchio L."/>
            <person name="Nolan M."/>
            <person name="Mikhailova N."/>
            <person name="Lykidis A."/>
            <person name="Land M.L."/>
            <person name="Brettin T."/>
            <person name="Stetter K.O."/>
            <person name="Nelson K.E."/>
            <person name="Gogarten J.P."/>
            <person name="Noll K.M."/>
        </authorList>
    </citation>
    <scope>NUCLEOTIDE SEQUENCE [LARGE SCALE GENOMIC DNA]</scope>
    <source>
        <strain>RQ2</strain>
    </source>
</reference>
<proteinExistence type="inferred from homology"/>
<sequence length="496" mass="56661">MIDLKQYEFWFLVGSQYLYGLETLKKVEQQASKIVDSLNDDPIFPSKIVLKPVLKSSSEITEIFEKANADPKCAGVIVWMHTFSPSKMWIRGLSINKKPLLHLHTQYNREIPWDTIDMDYMNLNQSAHGDREHGFIHARMRLPRKVVVGHWEEKEVREKIAKWMRVACAIQDGRMGQIVRFGDNMREVASTEGDKVEAQIKLGWSINTWGVGELAERVKAVPEREVEELLTEYREKYIMPEDEYSLKAIREQAKIEIALREFLKEKNAIAFTTTFEDLHDLPQLPGLAVQRLMEEGYGFGAEGDWKAAGLVRAIKVMGTGLPGGTSFMEDYTYHLTPGNELVLGAHMLEVCPTIAKEKPRIEVHPLSIGGKADPARLVFDGQEGPAVNASIVDMGNRFRLVVNKVLSVPIERKMPKLPTARVLWKPMPDFKRATTAWILAGGSHHTAFSTAIDIEYLIDWAEALEIEYVVIDENLDLEDFKKELRWNELYWGLLKR</sequence>
<accession>B1L9M7</accession>
<gene>
    <name evidence="1" type="primary">araA</name>
    <name type="ordered locus">TRQ2_0672</name>
</gene>
<evidence type="ECO:0000255" key="1">
    <source>
        <dbReference type="HAMAP-Rule" id="MF_00519"/>
    </source>
</evidence>
<name>ARAA_THESQ</name>
<keyword id="KW-0054">Arabinose catabolism</keyword>
<keyword id="KW-0119">Carbohydrate metabolism</keyword>
<keyword id="KW-0413">Isomerase</keyword>
<keyword id="KW-0464">Manganese</keyword>
<keyword id="KW-0479">Metal-binding</keyword>
<feature type="chain" id="PRO_1000127621" description="L-arabinose isomerase">
    <location>
        <begin position="1"/>
        <end position="496"/>
    </location>
</feature>
<feature type="binding site" evidence="1">
    <location>
        <position position="302"/>
    </location>
    <ligand>
        <name>Mn(2+)</name>
        <dbReference type="ChEBI" id="CHEBI:29035"/>
    </ligand>
</feature>
<feature type="binding site" evidence="1">
    <location>
        <position position="329"/>
    </location>
    <ligand>
        <name>Mn(2+)</name>
        <dbReference type="ChEBI" id="CHEBI:29035"/>
    </ligand>
</feature>
<feature type="binding site" evidence="1">
    <location>
        <position position="346"/>
    </location>
    <ligand>
        <name>Mn(2+)</name>
        <dbReference type="ChEBI" id="CHEBI:29035"/>
    </ligand>
</feature>
<feature type="binding site" evidence="1">
    <location>
        <position position="445"/>
    </location>
    <ligand>
        <name>Mn(2+)</name>
        <dbReference type="ChEBI" id="CHEBI:29035"/>
    </ligand>
</feature>
<comment type="function">
    <text evidence="1">Catalyzes the conversion of L-arabinose to L-ribulose.</text>
</comment>
<comment type="catalytic activity">
    <reaction evidence="1">
        <text>beta-L-arabinopyranose = L-ribulose</text>
        <dbReference type="Rhea" id="RHEA:14821"/>
        <dbReference type="ChEBI" id="CHEBI:16880"/>
        <dbReference type="ChEBI" id="CHEBI:40886"/>
        <dbReference type="EC" id="5.3.1.4"/>
    </reaction>
</comment>
<comment type="cofactor">
    <cofactor evidence="1">
        <name>Mn(2+)</name>
        <dbReference type="ChEBI" id="CHEBI:29035"/>
    </cofactor>
    <text evidence="1">Binds 1 Mn(2+) ion per subunit.</text>
</comment>
<comment type="pathway">
    <text evidence="1">Carbohydrate degradation; L-arabinose degradation via L-ribulose; D-xylulose 5-phosphate from L-arabinose (bacterial route): step 1/3.</text>
</comment>
<comment type="similarity">
    <text evidence="1">Belongs to the arabinose isomerase family.</text>
</comment>